<dbReference type="EC" id="2.7.7.38" evidence="1"/>
<dbReference type="EMBL" id="BX897699">
    <property type="protein sequence ID" value="CAF27048.1"/>
    <property type="molecule type" value="Genomic_DNA"/>
</dbReference>
<dbReference type="RefSeq" id="WP_011180187.1">
    <property type="nucleotide sequence ID" value="NZ_LRIJ02000001.1"/>
</dbReference>
<dbReference type="SMR" id="Q6G4U6"/>
<dbReference type="PaxDb" id="283166-BH02360"/>
<dbReference type="EnsemblBacteria" id="CAF27048">
    <property type="protein sequence ID" value="CAF27048"/>
    <property type="gene ID" value="BH02360"/>
</dbReference>
<dbReference type="KEGG" id="bhe:BH02360"/>
<dbReference type="eggNOG" id="COG1212">
    <property type="taxonomic scope" value="Bacteria"/>
</dbReference>
<dbReference type="OrthoDB" id="9815559at2"/>
<dbReference type="UniPathway" id="UPA00030"/>
<dbReference type="UniPathway" id="UPA00358">
    <property type="reaction ID" value="UER00476"/>
</dbReference>
<dbReference type="Proteomes" id="UP000000421">
    <property type="component" value="Chromosome"/>
</dbReference>
<dbReference type="GO" id="GO:0005829">
    <property type="term" value="C:cytosol"/>
    <property type="evidence" value="ECO:0007669"/>
    <property type="project" value="TreeGrafter"/>
</dbReference>
<dbReference type="GO" id="GO:0008690">
    <property type="term" value="F:3-deoxy-manno-octulosonate cytidylyltransferase activity"/>
    <property type="evidence" value="ECO:0007669"/>
    <property type="project" value="UniProtKB-UniRule"/>
</dbReference>
<dbReference type="GO" id="GO:0033468">
    <property type="term" value="P:CMP-keto-3-deoxy-D-manno-octulosonic acid biosynthetic process"/>
    <property type="evidence" value="ECO:0007669"/>
    <property type="project" value="UniProtKB-UniRule"/>
</dbReference>
<dbReference type="GO" id="GO:0009103">
    <property type="term" value="P:lipopolysaccharide biosynthetic process"/>
    <property type="evidence" value="ECO:0007669"/>
    <property type="project" value="UniProtKB-UniRule"/>
</dbReference>
<dbReference type="CDD" id="cd02517">
    <property type="entry name" value="CMP-KDO-Synthetase"/>
    <property type="match status" value="1"/>
</dbReference>
<dbReference type="Gene3D" id="3.90.550.10">
    <property type="entry name" value="Spore Coat Polysaccharide Biosynthesis Protein SpsA, Chain A"/>
    <property type="match status" value="1"/>
</dbReference>
<dbReference type="HAMAP" id="MF_00057">
    <property type="entry name" value="KdsB"/>
    <property type="match status" value="1"/>
</dbReference>
<dbReference type="InterPro" id="IPR003329">
    <property type="entry name" value="Cytidylyl_trans"/>
</dbReference>
<dbReference type="InterPro" id="IPR004528">
    <property type="entry name" value="KdsB"/>
</dbReference>
<dbReference type="InterPro" id="IPR029044">
    <property type="entry name" value="Nucleotide-diphossugar_trans"/>
</dbReference>
<dbReference type="NCBIfam" id="TIGR00466">
    <property type="entry name" value="kdsB"/>
    <property type="match status" value="1"/>
</dbReference>
<dbReference type="NCBIfam" id="NF003948">
    <property type="entry name" value="PRK05450.1-1"/>
    <property type="match status" value="1"/>
</dbReference>
<dbReference type="NCBIfam" id="NF003952">
    <property type="entry name" value="PRK05450.1-5"/>
    <property type="match status" value="1"/>
</dbReference>
<dbReference type="PANTHER" id="PTHR42866">
    <property type="entry name" value="3-DEOXY-MANNO-OCTULOSONATE CYTIDYLYLTRANSFERASE"/>
    <property type="match status" value="1"/>
</dbReference>
<dbReference type="PANTHER" id="PTHR42866:SF2">
    <property type="entry name" value="3-DEOXY-MANNO-OCTULOSONATE CYTIDYLYLTRANSFERASE, MITOCHONDRIAL"/>
    <property type="match status" value="1"/>
</dbReference>
<dbReference type="Pfam" id="PF02348">
    <property type="entry name" value="CTP_transf_3"/>
    <property type="match status" value="1"/>
</dbReference>
<dbReference type="SUPFAM" id="SSF53448">
    <property type="entry name" value="Nucleotide-diphospho-sugar transferases"/>
    <property type="match status" value="1"/>
</dbReference>
<name>KDSB_BARHE</name>
<sequence>MALEPIILIPARIGSTRLPQKALAEIAGKPMIVHVAEQAKKAAFGRIIVATDHNNIAKVVTAYGHECIITCRDHKSGSDRIYEALTHIDPERRYNVILNVQGDLPTITPHEIISALRPLENSLTDIATLGAKIVEENEKTDPNIVKIIGTPLSHNRFRALYFTRATAPYGDGPLYHHIGIYAYRREALEKFVALKPSPLEQREKLEQLRALEHNMRIDVEIVDTIPLGVDTQRDLERVRKILA</sequence>
<comment type="function">
    <text evidence="1">Activates KDO (a required 8-carbon sugar) for incorporation into bacterial lipopolysaccharide in Gram-negative bacteria.</text>
</comment>
<comment type="catalytic activity">
    <reaction evidence="1">
        <text>3-deoxy-alpha-D-manno-oct-2-ulosonate + CTP = CMP-3-deoxy-beta-D-manno-octulosonate + diphosphate</text>
        <dbReference type="Rhea" id="RHEA:23448"/>
        <dbReference type="ChEBI" id="CHEBI:33019"/>
        <dbReference type="ChEBI" id="CHEBI:37563"/>
        <dbReference type="ChEBI" id="CHEBI:85986"/>
        <dbReference type="ChEBI" id="CHEBI:85987"/>
        <dbReference type="EC" id="2.7.7.38"/>
    </reaction>
</comment>
<comment type="pathway">
    <text evidence="1">Nucleotide-sugar biosynthesis; CMP-3-deoxy-D-manno-octulosonate biosynthesis; CMP-3-deoxy-D-manno-octulosonate from 3-deoxy-D-manno-octulosonate and CTP: step 1/1.</text>
</comment>
<comment type="pathway">
    <text evidence="1">Bacterial outer membrane biogenesis; lipopolysaccharide biosynthesis.</text>
</comment>
<comment type="subcellular location">
    <subcellularLocation>
        <location evidence="1">Cytoplasm</location>
    </subcellularLocation>
</comment>
<comment type="similarity">
    <text evidence="1">Belongs to the KdsB family.</text>
</comment>
<keyword id="KW-0963">Cytoplasm</keyword>
<keyword id="KW-0448">Lipopolysaccharide biosynthesis</keyword>
<keyword id="KW-0548">Nucleotidyltransferase</keyword>
<keyword id="KW-0808">Transferase</keyword>
<gene>
    <name evidence="1" type="primary">kdsB</name>
    <name type="ordered locus">BH02360</name>
</gene>
<proteinExistence type="inferred from homology"/>
<feature type="chain" id="PRO_0000370001" description="3-deoxy-manno-octulosonate cytidylyltransferase">
    <location>
        <begin position="1"/>
        <end position="243"/>
    </location>
</feature>
<accession>Q6G4U6</accession>
<protein>
    <recommendedName>
        <fullName evidence="1">3-deoxy-manno-octulosonate cytidylyltransferase</fullName>
        <ecNumber evidence="1">2.7.7.38</ecNumber>
    </recommendedName>
    <alternativeName>
        <fullName evidence="1">CMP-2-keto-3-deoxyoctulosonic acid synthase</fullName>
        <shortName evidence="1">CKS</shortName>
        <shortName evidence="1">CMP-KDO synthase</shortName>
    </alternativeName>
</protein>
<reference key="1">
    <citation type="journal article" date="2004" name="Proc. Natl. Acad. Sci. U.S.A.">
        <title>The louse-borne human pathogen Bartonella quintana is a genomic derivative of the zoonotic agent Bartonella henselae.</title>
        <authorList>
            <person name="Alsmark U.C.M."/>
            <person name="Frank A.C."/>
            <person name="Karlberg E.O."/>
            <person name="Legault B.-A."/>
            <person name="Ardell D.H."/>
            <person name="Canbaeck B."/>
            <person name="Eriksson A.-S."/>
            <person name="Naeslund A.K."/>
            <person name="Handley S.A."/>
            <person name="Huvet M."/>
            <person name="La Scola B."/>
            <person name="Holmberg M."/>
            <person name="Andersson S.G.E."/>
        </authorList>
    </citation>
    <scope>NUCLEOTIDE SEQUENCE [LARGE SCALE GENOMIC DNA]</scope>
    <source>
        <strain>ATCC 49882 / DSM 28221 / CCUG 30454 / Houston 1</strain>
    </source>
</reference>
<organism>
    <name type="scientific">Bartonella henselae (strain ATCC 49882 / DSM 28221 / CCUG 30454 / Houston 1)</name>
    <name type="common">Rochalimaea henselae</name>
    <dbReference type="NCBI Taxonomy" id="283166"/>
    <lineage>
        <taxon>Bacteria</taxon>
        <taxon>Pseudomonadati</taxon>
        <taxon>Pseudomonadota</taxon>
        <taxon>Alphaproteobacteria</taxon>
        <taxon>Hyphomicrobiales</taxon>
        <taxon>Bartonellaceae</taxon>
        <taxon>Bartonella</taxon>
    </lineage>
</organism>
<evidence type="ECO:0000255" key="1">
    <source>
        <dbReference type="HAMAP-Rule" id="MF_00057"/>
    </source>
</evidence>